<keyword id="KW-0010">Activator</keyword>
<keyword id="KW-0238">DNA-binding</keyword>
<keyword id="KW-0479">Metal-binding</keyword>
<keyword id="KW-0539">Nucleus</keyword>
<keyword id="KW-0597">Phosphoprotein</keyword>
<keyword id="KW-1185">Reference proteome</keyword>
<keyword id="KW-0677">Repeat</keyword>
<keyword id="KW-0804">Transcription</keyword>
<keyword id="KW-0805">Transcription regulation</keyword>
<keyword id="KW-0862">Zinc</keyword>
<keyword id="KW-0863">Zinc-finger</keyword>
<protein>
    <recommendedName>
        <fullName>Transcription factor Sp4</fullName>
    </recommendedName>
</protein>
<gene>
    <name type="primary">Sp4</name>
</gene>
<dbReference type="EMBL" id="U62522">
    <property type="protein sequence ID" value="AAC52653.1"/>
    <property type="molecule type" value="mRNA"/>
</dbReference>
<dbReference type="EMBL" id="AC163032">
    <property type="status" value="NOT_ANNOTATED_CDS"/>
    <property type="molecule type" value="Genomic_DNA"/>
</dbReference>
<dbReference type="EMBL" id="AC163034">
    <property type="status" value="NOT_ANNOTATED_CDS"/>
    <property type="molecule type" value="Genomic_DNA"/>
</dbReference>
<dbReference type="CCDS" id="CCDS36579.1"/>
<dbReference type="SMR" id="Q62445"/>
<dbReference type="FunCoup" id="Q62445">
    <property type="interactions" value="4092"/>
</dbReference>
<dbReference type="STRING" id="10090.ENSMUSP00000152603"/>
<dbReference type="GlyGen" id="Q62445">
    <property type="glycosylation" value="1 site, 1 N-linked glycan (1 site)"/>
</dbReference>
<dbReference type="iPTMnet" id="Q62445"/>
<dbReference type="PhosphoSitePlus" id="Q62445"/>
<dbReference type="jPOST" id="Q62445"/>
<dbReference type="PaxDb" id="10090-ENSMUSP00000026367"/>
<dbReference type="PeptideAtlas" id="Q62445"/>
<dbReference type="ProteomicsDB" id="258713"/>
<dbReference type="AGR" id="MGI:107595"/>
<dbReference type="MGI" id="MGI:107595">
    <property type="gene designation" value="Sp4"/>
</dbReference>
<dbReference type="eggNOG" id="KOG1721">
    <property type="taxonomic scope" value="Eukaryota"/>
</dbReference>
<dbReference type="InParanoid" id="Q62445"/>
<dbReference type="ChiTaRS" id="Sp4">
    <property type="organism name" value="mouse"/>
</dbReference>
<dbReference type="PRO" id="PR:Q62445"/>
<dbReference type="Proteomes" id="UP000000589">
    <property type="component" value="Unplaced"/>
</dbReference>
<dbReference type="RNAct" id="Q62445">
    <property type="molecule type" value="protein"/>
</dbReference>
<dbReference type="GO" id="GO:0005634">
    <property type="term" value="C:nucleus"/>
    <property type="evidence" value="ECO:0007669"/>
    <property type="project" value="UniProtKB-SubCell"/>
</dbReference>
<dbReference type="GO" id="GO:0003677">
    <property type="term" value="F:DNA binding"/>
    <property type="evidence" value="ECO:0000250"/>
    <property type="project" value="MGI"/>
</dbReference>
<dbReference type="GO" id="GO:0008270">
    <property type="term" value="F:zinc ion binding"/>
    <property type="evidence" value="ECO:0007669"/>
    <property type="project" value="UniProtKB-KW"/>
</dbReference>
<dbReference type="GO" id="GO:0008016">
    <property type="term" value="P:regulation of heart contraction"/>
    <property type="evidence" value="ECO:0000315"/>
    <property type="project" value="MGI"/>
</dbReference>
<dbReference type="CDD" id="cd22536">
    <property type="entry name" value="SP4_N"/>
    <property type="match status" value="1"/>
</dbReference>
<dbReference type="FunFam" id="3.30.160.60:FF:000014">
    <property type="entry name" value="Transcription factor Sp3"/>
    <property type="match status" value="1"/>
</dbReference>
<dbReference type="FunFam" id="3.30.160.60:FF:000026">
    <property type="entry name" value="Transcription factor Sp3"/>
    <property type="match status" value="1"/>
</dbReference>
<dbReference type="FunFam" id="3.30.160.60:FF:000061">
    <property type="entry name" value="Transcription factor Sp3"/>
    <property type="match status" value="1"/>
</dbReference>
<dbReference type="Gene3D" id="3.30.160.60">
    <property type="entry name" value="Classic Zinc Finger"/>
    <property type="match status" value="3"/>
</dbReference>
<dbReference type="InterPro" id="IPR039938">
    <property type="entry name" value="Sp4-like"/>
</dbReference>
<dbReference type="InterPro" id="IPR036236">
    <property type="entry name" value="Znf_C2H2_sf"/>
</dbReference>
<dbReference type="InterPro" id="IPR013087">
    <property type="entry name" value="Znf_C2H2_type"/>
</dbReference>
<dbReference type="PANTHER" id="PTHR14947:SF23">
    <property type="entry name" value="SP4 TRANSCRIPTION FACTOR"/>
    <property type="match status" value="1"/>
</dbReference>
<dbReference type="PANTHER" id="PTHR14947">
    <property type="entry name" value="ZINC FINGER PROTEIN"/>
    <property type="match status" value="1"/>
</dbReference>
<dbReference type="Pfam" id="PF00096">
    <property type="entry name" value="zf-C2H2"/>
    <property type="match status" value="3"/>
</dbReference>
<dbReference type="SMART" id="SM00355">
    <property type="entry name" value="ZnF_C2H2"/>
    <property type="match status" value="3"/>
</dbReference>
<dbReference type="SUPFAM" id="SSF57667">
    <property type="entry name" value="beta-beta-alpha zinc fingers"/>
    <property type="match status" value="2"/>
</dbReference>
<dbReference type="PROSITE" id="PS00028">
    <property type="entry name" value="ZINC_FINGER_C2H2_1"/>
    <property type="match status" value="3"/>
</dbReference>
<dbReference type="PROSITE" id="PS50157">
    <property type="entry name" value="ZINC_FINGER_C2H2_2"/>
    <property type="match status" value="3"/>
</dbReference>
<reference key="1">
    <citation type="journal article" date="1996" name="Dev. Biol.">
        <title>Sp4, a member of the Sp1-family of zinc finger transcription factors, is required for normal murine growth, viability, and male fertility.</title>
        <authorList>
            <person name="Supp D.M."/>
            <person name="Witte D.P."/>
            <person name="Branford W.W."/>
            <person name="Smith E.P."/>
            <person name="Potter S.S."/>
        </authorList>
    </citation>
    <scope>NUCLEOTIDE SEQUENCE [MRNA]</scope>
</reference>
<reference key="2">
    <citation type="journal article" date="2009" name="PLoS Biol.">
        <title>Lineage-specific biology revealed by a finished genome assembly of the mouse.</title>
        <authorList>
            <person name="Church D.M."/>
            <person name="Goodstadt L."/>
            <person name="Hillier L.W."/>
            <person name="Zody M.C."/>
            <person name="Goldstein S."/>
            <person name="She X."/>
            <person name="Bult C.J."/>
            <person name="Agarwala R."/>
            <person name="Cherry J.L."/>
            <person name="DiCuccio M."/>
            <person name="Hlavina W."/>
            <person name="Kapustin Y."/>
            <person name="Meric P."/>
            <person name="Maglott D."/>
            <person name="Birtle Z."/>
            <person name="Marques A.C."/>
            <person name="Graves T."/>
            <person name="Zhou S."/>
            <person name="Teague B."/>
            <person name="Potamousis K."/>
            <person name="Churas C."/>
            <person name="Place M."/>
            <person name="Herschleb J."/>
            <person name="Runnheim R."/>
            <person name="Forrest D."/>
            <person name="Amos-Landgraf J."/>
            <person name="Schwartz D.C."/>
            <person name="Cheng Z."/>
            <person name="Lindblad-Toh K."/>
            <person name="Eichler E.E."/>
            <person name="Ponting C.P."/>
        </authorList>
    </citation>
    <scope>NUCLEOTIDE SEQUENCE [LARGE SCALE GENOMIC DNA]</scope>
    <source>
        <strain>C57BL/6J</strain>
    </source>
</reference>
<organism>
    <name type="scientific">Mus musculus</name>
    <name type="common">Mouse</name>
    <dbReference type="NCBI Taxonomy" id="10090"/>
    <lineage>
        <taxon>Eukaryota</taxon>
        <taxon>Metazoa</taxon>
        <taxon>Chordata</taxon>
        <taxon>Craniata</taxon>
        <taxon>Vertebrata</taxon>
        <taxon>Euteleostomi</taxon>
        <taxon>Mammalia</taxon>
        <taxon>Eutheria</taxon>
        <taxon>Euarchontoglires</taxon>
        <taxon>Glires</taxon>
        <taxon>Rodentia</taxon>
        <taxon>Myomorpha</taxon>
        <taxon>Muroidea</taxon>
        <taxon>Muridae</taxon>
        <taxon>Murinae</taxon>
        <taxon>Mus</taxon>
        <taxon>Mus</taxon>
    </lineage>
</organism>
<evidence type="ECO:0000250" key="1">
    <source>
        <dbReference type="UniProtKB" id="Q02446"/>
    </source>
</evidence>
<evidence type="ECO:0000255" key="2">
    <source>
        <dbReference type="PROSITE-ProRule" id="PRU00042"/>
    </source>
</evidence>
<evidence type="ECO:0000256" key="3">
    <source>
        <dbReference type="SAM" id="MobiDB-lite"/>
    </source>
</evidence>
<evidence type="ECO:0000305" key="4"/>
<comment type="function">
    <text>Binds to GT and GC boxes promoters elements. Probable transcriptional activator. Required for normal male reproductive behavior.</text>
</comment>
<comment type="subcellular location">
    <subcellularLocation>
        <location>Nucleus</location>
    </subcellularLocation>
</comment>
<comment type="tissue specificity">
    <text>Expressed in many tissues.</text>
</comment>
<comment type="developmental stage">
    <text>Highly expressed in embryos in the developing central nervous system (CNS). Expression is seen as early as day 9 of development, where transcripts are abundant in the posterior neuropore. Expression in later embryos is detected throughout the CNS as well as in other structures.</text>
</comment>
<comment type="domain">
    <text evidence="1">The 9aaTAD motif is a transactivation domain present in a large number of yeast and animal transcription factors. In SP4, the motif is inactive.</text>
</comment>
<comment type="similarity">
    <text evidence="4">Belongs to the Sp1 C2H2-type zinc-finger protein family.</text>
</comment>
<feature type="chain" id="PRO_0000047145" description="Transcription factor Sp4">
    <location>
        <begin position="1"/>
        <end position="782"/>
    </location>
</feature>
<feature type="zinc finger region" description="C2H2-type 1" evidence="2">
    <location>
        <begin position="645"/>
        <end position="669"/>
    </location>
</feature>
<feature type="zinc finger region" description="C2H2-type 2" evidence="2">
    <location>
        <begin position="675"/>
        <end position="699"/>
    </location>
</feature>
<feature type="zinc finger region" description="C2H2-type 3" evidence="2">
    <location>
        <begin position="705"/>
        <end position="727"/>
    </location>
</feature>
<feature type="region of interest" description="Disordered" evidence="3">
    <location>
        <begin position="1"/>
        <end position="48"/>
    </location>
</feature>
<feature type="region of interest" description="Disordered" evidence="3">
    <location>
        <begin position="107"/>
        <end position="148"/>
    </location>
</feature>
<feature type="region of interest" description="Disordered" evidence="3">
    <location>
        <begin position="275"/>
        <end position="385"/>
    </location>
</feature>
<feature type="short sequence motif" description="9aaTAD; inactive" evidence="1">
    <location>
        <begin position="465"/>
        <end position="473"/>
    </location>
</feature>
<feature type="compositionally biased region" description="Polar residues" evidence="3">
    <location>
        <begin position="107"/>
        <end position="119"/>
    </location>
</feature>
<feature type="compositionally biased region" description="Low complexity" evidence="3">
    <location>
        <begin position="120"/>
        <end position="146"/>
    </location>
</feature>
<feature type="compositionally biased region" description="Low complexity" evidence="3">
    <location>
        <begin position="281"/>
        <end position="342"/>
    </location>
</feature>
<feature type="compositionally biased region" description="Polar residues" evidence="3">
    <location>
        <begin position="344"/>
        <end position="354"/>
    </location>
</feature>
<feature type="compositionally biased region" description="Low complexity" evidence="3">
    <location>
        <begin position="364"/>
        <end position="378"/>
    </location>
</feature>
<feature type="modified residue" description="Phosphoserine" evidence="1">
    <location>
        <position position="44"/>
    </location>
</feature>
<feature type="sequence conflict" description="In Ref. 1; AAC52653." evidence="4" ref="1">
    <original>H</original>
    <variation>Q</variation>
    <location>
        <position position="42"/>
    </location>
</feature>
<feature type="sequence conflict" description="In Ref. 1; AAC52653." evidence="4" ref="1">
    <original>S</original>
    <variation>R</variation>
    <location>
        <position position="183"/>
    </location>
</feature>
<accession>Q62445</accession>
<accession>E9QNI3</accession>
<proteinExistence type="evidence at transcript level"/>
<name>SP4_MOUSE</name>
<sequence>MSDQKKEEEEEAAAAMATEGGKTSEPENNNKKPKTSGSQDSHPSPLALLAATCSKIGTPGENQATGQQQIIIDPSQGLVQLQNQPQQLELVTTQLAGNAWQLVASTPPASKENNVSQPASSSSSSSSSNNGSSSPTKTKSGNPSTPNQFQVIQVQNPSGSVQYQVIPQLQTVEGQQIQINPTSSSSLQDLQGQIQLISAGNNQAILTAANRTASGNILAQNLANQTVPVQIRPGVSIPLQLQTLPGTQAQVVTTLPINIGGVTLALPVINNVTAGGGTGQVGQPTTTTDSGTSNGNQLVSTPTTSTAPASTMPESPSSSTTCTTTASTTLTSSDTLVSSADTGQYASTSASSSERTIEEPQTPAATESEAQSSSQLQSNGIQNAQDQSNSLQQVQIVGQPILQQIQIQQPQQQIIQAIPPQSFQLQSGQTIQTIQQQPLQNVQLQAVNPTQVLIRAPTLTPSGQISWQTVQVQNIQSLSNLQVQNAGLSQQLTITPVSSSGGTTLAQIAPVAVAGAPITLNTAQLASVPNLQTVSVANLGAAGVQVQGVPVTITSVAGQQQGQDGVKVQQATIAPVTVAVGGIANATIGAVSPDQLTQVHLQQGQQTSDAEVQPGKRLRRVACSCPNCREGEGRGSSEPGKKKQHVCHIEGCGKVYGKTSHLRAHLRWHTGERPFICNWMFCGKRFTRSDELQRHRRTHTGEKRFECPECSKRFMRSDHLSKHVKTHQNKKGGGTALAIVTSGELDSSVTEVLGSPRIVTVAAISQDSNPATPNVSTNMEEF</sequence>